<accession>P53375</accession>
<comment type="function">
    <text>Tubulin is the major constituent of microtubules, a cylinder consisting of laterally associated linear protofilaments composed of alpha- and beta-tubulin heterodimers. Microtubules grow by the addition of GTP-tubulin dimers to the microtubule end, where a stabilizing cap forms. Below the cap, tubulin dimers are in GDP-bound state, owing to GTPase activity of alpha-tubulin.</text>
</comment>
<comment type="cofactor">
    <cofactor evidence="1">
        <name>Mg(2+)</name>
        <dbReference type="ChEBI" id="CHEBI:18420"/>
    </cofactor>
</comment>
<comment type="subunit">
    <text>Dimer of alpha and beta chains. A typical microtubule is a hollow water-filled tube with an outer diameter of 25 nm and an inner diameter of 15 nM. Alpha-beta heterodimers associate head-to-tail to form protofilaments running lengthwise along the microtubule wall with the beta-tubulin subunit facing the microtubule plus end conferring a structural polarity. Microtubules usually have 13 protofilaments but different protofilament numbers can be found in some organisms and specialized cells.</text>
</comment>
<comment type="subcellular location">
    <subcellularLocation>
        <location>Cytoplasm</location>
        <location>Cytoskeleton</location>
    </subcellularLocation>
</comment>
<comment type="similarity">
    <text evidence="3">Belongs to the tubulin family.</text>
</comment>
<reference key="1">
    <citation type="submission" date="1995-11" db="EMBL/GenBank/DDBJ databases">
        <title>Complete nucleotide sequence of beta-tubulin gene from Penicillium digitatum and point mutations characterized in benomyl-resistant field isolates.</title>
        <authorList>
            <person name="Adachi K."/>
            <person name="Namba S."/>
            <person name="Tsuchizaki T."/>
            <person name="Hibi T."/>
        </authorList>
    </citation>
    <scope>NUCLEOTIDE SEQUENCE [GENOMIC DNA]</scope>
    <source>
        <strain>PD5</strain>
    </source>
</reference>
<evidence type="ECO:0000250" key="1">
    <source>
        <dbReference type="UniProtKB" id="P68363"/>
    </source>
</evidence>
<evidence type="ECO:0000250" key="2">
    <source>
        <dbReference type="UniProtKB" id="Q13509"/>
    </source>
</evidence>
<evidence type="ECO:0000305" key="3"/>
<dbReference type="EMBL" id="D78154">
    <property type="protein sequence ID" value="BAA11229.1"/>
    <property type="molecule type" value="Genomic_DNA"/>
</dbReference>
<dbReference type="SMR" id="P53375"/>
<dbReference type="VEuPathDB" id="FungiDB:PDIP_27420"/>
<dbReference type="GO" id="GO:0005737">
    <property type="term" value="C:cytoplasm"/>
    <property type="evidence" value="ECO:0007669"/>
    <property type="project" value="UniProtKB-KW"/>
</dbReference>
<dbReference type="GO" id="GO:0005874">
    <property type="term" value="C:microtubule"/>
    <property type="evidence" value="ECO:0007669"/>
    <property type="project" value="UniProtKB-KW"/>
</dbReference>
<dbReference type="GO" id="GO:0005525">
    <property type="term" value="F:GTP binding"/>
    <property type="evidence" value="ECO:0007669"/>
    <property type="project" value="UniProtKB-KW"/>
</dbReference>
<dbReference type="GO" id="GO:0003924">
    <property type="term" value="F:GTPase activity"/>
    <property type="evidence" value="ECO:0007669"/>
    <property type="project" value="InterPro"/>
</dbReference>
<dbReference type="GO" id="GO:0046872">
    <property type="term" value="F:metal ion binding"/>
    <property type="evidence" value="ECO:0007669"/>
    <property type="project" value="UniProtKB-KW"/>
</dbReference>
<dbReference type="GO" id="GO:0005200">
    <property type="term" value="F:structural constituent of cytoskeleton"/>
    <property type="evidence" value="ECO:0007669"/>
    <property type="project" value="InterPro"/>
</dbReference>
<dbReference type="GO" id="GO:0007017">
    <property type="term" value="P:microtubule-based process"/>
    <property type="evidence" value="ECO:0007669"/>
    <property type="project" value="InterPro"/>
</dbReference>
<dbReference type="CDD" id="cd02187">
    <property type="entry name" value="beta_tubulin"/>
    <property type="match status" value="1"/>
</dbReference>
<dbReference type="FunFam" id="1.10.287.600:FF:000003">
    <property type="entry name" value="Tubulin beta chain"/>
    <property type="match status" value="1"/>
</dbReference>
<dbReference type="FunFam" id="3.30.1330.20:FF:000002">
    <property type="entry name" value="Tubulin beta chain"/>
    <property type="match status" value="1"/>
</dbReference>
<dbReference type="FunFam" id="3.40.50.1440:FF:000009">
    <property type="entry name" value="Tubulin beta chain"/>
    <property type="match status" value="1"/>
</dbReference>
<dbReference type="Gene3D" id="1.10.287.600">
    <property type="entry name" value="Helix hairpin bin"/>
    <property type="match status" value="1"/>
</dbReference>
<dbReference type="Gene3D" id="3.30.1330.20">
    <property type="entry name" value="Tubulin/FtsZ, C-terminal domain"/>
    <property type="match status" value="1"/>
</dbReference>
<dbReference type="Gene3D" id="3.40.50.1440">
    <property type="entry name" value="Tubulin/FtsZ, GTPase domain"/>
    <property type="match status" value="1"/>
</dbReference>
<dbReference type="InterPro" id="IPR013838">
    <property type="entry name" value="Beta-tubulin_BS"/>
</dbReference>
<dbReference type="InterPro" id="IPR002453">
    <property type="entry name" value="Beta_tubulin"/>
</dbReference>
<dbReference type="InterPro" id="IPR008280">
    <property type="entry name" value="Tub_FtsZ_C"/>
</dbReference>
<dbReference type="InterPro" id="IPR000217">
    <property type="entry name" value="Tubulin"/>
</dbReference>
<dbReference type="InterPro" id="IPR037103">
    <property type="entry name" value="Tubulin/FtsZ-like_C"/>
</dbReference>
<dbReference type="InterPro" id="IPR018316">
    <property type="entry name" value="Tubulin/FtsZ_2-layer-sand-dom"/>
</dbReference>
<dbReference type="InterPro" id="IPR036525">
    <property type="entry name" value="Tubulin/FtsZ_GTPase_sf"/>
</dbReference>
<dbReference type="InterPro" id="IPR023123">
    <property type="entry name" value="Tubulin_C"/>
</dbReference>
<dbReference type="InterPro" id="IPR017975">
    <property type="entry name" value="Tubulin_CS"/>
</dbReference>
<dbReference type="InterPro" id="IPR003008">
    <property type="entry name" value="Tubulin_FtsZ_GTPase"/>
</dbReference>
<dbReference type="PANTHER" id="PTHR11588">
    <property type="entry name" value="TUBULIN"/>
    <property type="match status" value="1"/>
</dbReference>
<dbReference type="Pfam" id="PF00091">
    <property type="entry name" value="Tubulin"/>
    <property type="match status" value="1"/>
</dbReference>
<dbReference type="Pfam" id="PF03953">
    <property type="entry name" value="Tubulin_C"/>
    <property type="match status" value="1"/>
</dbReference>
<dbReference type="PRINTS" id="PR01163">
    <property type="entry name" value="BETATUBULIN"/>
</dbReference>
<dbReference type="PRINTS" id="PR01161">
    <property type="entry name" value="TUBULIN"/>
</dbReference>
<dbReference type="SMART" id="SM00864">
    <property type="entry name" value="Tubulin"/>
    <property type="match status" value="1"/>
</dbReference>
<dbReference type="SMART" id="SM00865">
    <property type="entry name" value="Tubulin_C"/>
    <property type="match status" value="1"/>
</dbReference>
<dbReference type="SUPFAM" id="SSF55307">
    <property type="entry name" value="Tubulin C-terminal domain-like"/>
    <property type="match status" value="1"/>
</dbReference>
<dbReference type="SUPFAM" id="SSF52490">
    <property type="entry name" value="Tubulin nucleotide-binding domain-like"/>
    <property type="match status" value="1"/>
</dbReference>
<dbReference type="PROSITE" id="PS00227">
    <property type="entry name" value="TUBULIN"/>
    <property type="match status" value="1"/>
</dbReference>
<dbReference type="PROSITE" id="PS00228">
    <property type="entry name" value="TUBULIN_B_AUTOREG"/>
    <property type="match status" value="1"/>
</dbReference>
<name>TBB_PENDI</name>
<keyword id="KW-0963">Cytoplasm</keyword>
<keyword id="KW-0206">Cytoskeleton</keyword>
<keyword id="KW-0342">GTP-binding</keyword>
<keyword id="KW-0460">Magnesium</keyword>
<keyword id="KW-0479">Metal-binding</keyword>
<keyword id="KW-0493">Microtubule</keyword>
<keyword id="KW-0547">Nucleotide-binding</keyword>
<proteinExistence type="inferred from homology"/>
<organism>
    <name type="scientific">Penicillium digitatum</name>
    <name type="common">Green mold</name>
    <dbReference type="NCBI Taxonomy" id="36651"/>
    <lineage>
        <taxon>Eukaryota</taxon>
        <taxon>Fungi</taxon>
        <taxon>Dikarya</taxon>
        <taxon>Ascomycota</taxon>
        <taxon>Pezizomycotina</taxon>
        <taxon>Eurotiomycetes</taxon>
        <taxon>Eurotiomycetidae</taxon>
        <taxon>Eurotiales</taxon>
        <taxon>Aspergillaceae</taxon>
        <taxon>Penicillium</taxon>
    </lineage>
</organism>
<protein>
    <recommendedName>
        <fullName>Tubulin beta chain</fullName>
    </recommendedName>
    <alternativeName>
        <fullName>Beta-tubulin</fullName>
    </alternativeName>
</protein>
<feature type="chain" id="PRO_0000048423" description="Tubulin beta chain">
    <location>
        <begin position="1"/>
        <end position="447"/>
    </location>
</feature>
<feature type="binding site" evidence="2">
    <location>
        <position position="11"/>
    </location>
    <ligand>
        <name>GTP</name>
        <dbReference type="ChEBI" id="CHEBI:37565"/>
    </ligand>
</feature>
<feature type="binding site" evidence="1">
    <location>
        <position position="69"/>
    </location>
    <ligand>
        <name>GTP</name>
        <dbReference type="ChEBI" id="CHEBI:37565"/>
    </ligand>
</feature>
<feature type="binding site" evidence="1">
    <location>
        <position position="69"/>
    </location>
    <ligand>
        <name>Mg(2+)</name>
        <dbReference type="ChEBI" id="CHEBI:18420"/>
    </ligand>
</feature>
<feature type="binding site" evidence="2">
    <location>
        <position position="138"/>
    </location>
    <ligand>
        <name>GTP</name>
        <dbReference type="ChEBI" id="CHEBI:37565"/>
    </ligand>
</feature>
<feature type="binding site" evidence="2">
    <location>
        <position position="142"/>
    </location>
    <ligand>
        <name>GTP</name>
        <dbReference type="ChEBI" id="CHEBI:37565"/>
    </ligand>
</feature>
<feature type="binding site" evidence="2">
    <location>
        <position position="143"/>
    </location>
    <ligand>
        <name>GTP</name>
        <dbReference type="ChEBI" id="CHEBI:37565"/>
    </ligand>
</feature>
<feature type="binding site" evidence="2">
    <location>
        <position position="144"/>
    </location>
    <ligand>
        <name>GTP</name>
        <dbReference type="ChEBI" id="CHEBI:37565"/>
    </ligand>
</feature>
<feature type="binding site" evidence="2">
    <location>
        <position position="204"/>
    </location>
    <ligand>
        <name>GTP</name>
        <dbReference type="ChEBI" id="CHEBI:37565"/>
    </ligand>
</feature>
<feature type="binding site" evidence="2">
    <location>
        <position position="226"/>
    </location>
    <ligand>
        <name>GTP</name>
        <dbReference type="ChEBI" id="CHEBI:37565"/>
    </ligand>
</feature>
<gene>
    <name type="primary">TUB2</name>
</gene>
<sequence length="447" mass="49877">MREIVHLQTGQCGNQIGAAFWQTISGEHGLDGDGQYNGTSDLQLERMNVYFNHASGDKYVPRAVLVDLEPGTMDAVRSGPFGKLFRPDNFVFGQSGAGNNWAKGHYTEGAELVDQVLDVVRREAEGCDCLQGFQITHSLGGGTGAGMGTLLISKIREEFPDRMMATFSVVPSPKVSDTVVEPYNATLSVHQLVEHSDETFCIDNEALYDICMRTLKLSQPSYGDLNHLVSAVMSGVTTSLRFPGQLNSDLRKLAVNMVPFPRLHFFMVGFAPLTSRGGSSYRQVSVPELTQQMFDPKNMMAASDFRNGRYLTCSALFRGKISMKEVEDQMRNIQNKNQSYFVEWIPNNVQTALCSVPPRGLKMSSTFVGNSTSIQELFKRVGDQFAAMFRRKAFLHWYTGEGMDEMEFTEAESNMNDLVSEYQQYQEASVSEGEEEYLAEDIVDEEV</sequence>